<accession>D2KX92</accession>
<name>NA21_THAAS</name>
<feature type="signal peptide" evidence="3">
    <location>
        <begin position="1"/>
        <end position="19"/>
    </location>
</feature>
<feature type="propeptide" id="PRO_0000404209" evidence="4">
    <location>
        <begin position="20"/>
        <end position="33"/>
    </location>
</feature>
<feature type="chain" id="PRO_0000404210" description="Delta-thalatoxin-Tas1a">
    <location>
        <begin position="36"/>
        <end position="84"/>
    </location>
</feature>
<feature type="disulfide bond" evidence="2">
    <location>
        <begin position="38"/>
        <end position="78"/>
    </location>
</feature>
<feature type="disulfide bond" evidence="2">
    <location>
        <begin position="40"/>
        <end position="68"/>
    </location>
</feature>
<feature type="disulfide bond" evidence="2">
    <location>
        <begin position="61"/>
        <end position="79"/>
    </location>
</feature>
<reference key="1">
    <citation type="journal article" date="2010" name="Comp. Biochem. Physiol.">
        <title>Isolation and cDNA cloning of type 2 sodium channel peptide toxins from three species of sea anemones (Cryptodendrum adhaesivum, Heterodactyla hemprichii and Thalassianthus aster) belonging to the family Thalassianthidae.</title>
        <authorList>
            <person name="Maeda M."/>
            <person name="Honma T."/>
            <person name="Shiomi K."/>
        </authorList>
    </citation>
    <scope>NUCLEOTIDE SEQUENCE [MRNA]</scope>
    <scope>PROTEIN SEQUENCE OF 36-54</scope>
    <scope>SUBCELLULAR LOCATION</scope>
    <scope>TOXIC DOSE</scope>
</reference>
<reference key="2">
    <citation type="journal article" date="2012" name="Toxicon">
        <title>Development of a rational nomenclature for naming peptide and protein toxins from sea anemones.</title>
        <authorList>
            <person name="Oliveira J.S."/>
            <person name="Fuentes-Silva D."/>
            <person name="King G.F."/>
        </authorList>
    </citation>
    <scope>NOMENCLATURE</scope>
</reference>
<organism>
    <name type="scientific">Thalassianthus aster</name>
    <name type="common">Fuzzy-tipped anemone</name>
    <dbReference type="NCBI Taxonomy" id="659516"/>
    <lineage>
        <taxon>Eukaryota</taxon>
        <taxon>Metazoa</taxon>
        <taxon>Cnidaria</taxon>
        <taxon>Anthozoa</taxon>
        <taxon>Hexacorallia</taxon>
        <taxon>Actiniaria</taxon>
        <taxon>Nynantheae</taxon>
        <taxon>Thalassianthidae</taxon>
        <taxon>Thalassianthus</taxon>
    </lineage>
</organism>
<keyword id="KW-0165">Cleavage on pair of basic residues</keyword>
<keyword id="KW-0903">Direct protein sequencing</keyword>
<keyword id="KW-1015">Disulfide bond</keyword>
<keyword id="KW-0872">Ion channel impairing toxin</keyword>
<keyword id="KW-0166">Nematocyst</keyword>
<keyword id="KW-0528">Neurotoxin</keyword>
<keyword id="KW-0964">Secreted</keyword>
<keyword id="KW-0732">Signal</keyword>
<keyword id="KW-0800">Toxin</keyword>
<keyword id="KW-0738">Voltage-gated sodium channel impairing toxin</keyword>
<dbReference type="EMBL" id="AB512763">
    <property type="protein sequence ID" value="BAI66464.1"/>
    <property type="molecule type" value="mRNA"/>
</dbReference>
<dbReference type="SMR" id="D2KX92"/>
<dbReference type="GO" id="GO:0005576">
    <property type="term" value="C:extracellular region"/>
    <property type="evidence" value="ECO:0007669"/>
    <property type="project" value="UniProtKB-SubCell"/>
</dbReference>
<dbReference type="GO" id="GO:0042151">
    <property type="term" value="C:nematocyst"/>
    <property type="evidence" value="ECO:0007669"/>
    <property type="project" value="UniProtKB-SubCell"/>
</dbReference>
<dbReference type="GO" id="GO:0017080">
    <property type="term" value="F:sodium channel regulator activity"/>
    <property type="evidence" value="ECO:0007669"/>
    <property type="project" value="UniProtKB-KW"/>
</dbReference>
<dbReference type="GO" id="GO:0090729">
    <property type="term" value="F:toxin activity"/>
    <property type="evidence" value="ECO:0007669"/>
    <property type="project" value="UniProtKB-KW"/>
</dbReference>
<dbReference type="Gene3D" id="2.20.20.10">
    <property type="entry name" value="Anthopleurin-A"/>
    <property type="match status" value="1"/>
</dbReference>
<dbReference type="InterPro" id="IPR023355">
    <property type="entry name" value="Myo_ane_neurotoxin_sf"/>
</dbReference>
<dbReference type="Pfam" id="PF00706">
    <property type="entry name" value="Toxin_4"/>
    <property type="match status" value="1"/>
</dbReference>
<dbReference type="SUPFAM" id="SSF57392">
    <property type="entry name" value="Defensin-like"/>
    <property type="match status" value="1"/>
</dbReference>
<evidence type="ECO:0000250" key="1"/>
<evidence type="ECO:0000250" key="2">
    <source>
        <dbReference type="UniProtKB" id="P19651"/>
    </source>
</evidence>
<evidence type="ECO:0000255" key="3"/>
<evidence type="ECO:0000269" key="4">
    <source>
    </source>
</evidence>
<evidence type="ECO:0000303" key="5">
    <source>
    </source>
</evidence>
<evidence type="ECO:0000303" key="6">
    <source>
    </source>
</evidence>
<evidence type="ECO:0000305" key="7"/>
<evidence type="ECO:0000312" key="8">
    <source>
        <dbReference type="EMBL" id="BAI66464.1"/>
    </source>
</evidence>
<comment type="function">
    <text evidence="1">Binds specifically to the voltage-gated sodium channel (Nav) and delays its inactivation.</text>
</comment>
<comment type="subcellular location">
    <subcellularLocation>
        <location evidence="4">Secreted</location>
    </subcellularLocation>
    <subcellularLocation>
        <location evidence="4">Nematocyst</location>
    </subcellularLocation>
</comment>
<comment type="toxic dose">
    <text evidence="4">LD(50) is 24 ug/kg to freshwater crabs.</text>
</comment>
<comment type="similarity">
    <text evidence="7">Belongs to the sea anemone sodium channel inhibitory toxin family. Type II subfamily.</text>
</comment>
<protein>
    <recommendedName>
        <fullName evidence="6">Delta-thalatoxin-Tas1a</fullName>
        <shortName evidence="6">Delta-TATX-Tas1a</shortName>
    </recommendedName>
    <alternativeName>
        <fullName evidence="5">Delta-thalatoxin-Ta1a</fullName>
        <shortName evidence="5">Delta-TLTX-Ta1a</shortName>
    </alternativeName>
    <alternativeName>
        <fullName evidence="8">Ta I</fullName>
    </alternativeName>
</protein>
<sequence length="84" mass="9230">MAYLKIVLVALMLVLAVSAMRRPDQQDQDISVAKRVACKCDDDGPDIRSATLTGTVDLGSCDEGWEKCASYYTVIADCCRRPRS</sequence>
<proteinExistence type="evidence at protein level"/>